<organism>
    <name type="scientific">Aliivibrio fischeri (strain MJ11)</name>
    <name type="common">Vibrio fischeri</name>
    <dbReference type="NCBI Taxonomy" id="388396"/>
    <lineage>
        <taxon>Bacteria</taxon>
        <taxon>Pseudomonadati</taxon>
        <taxon>Pseudomonadota</taxon>
        <taxon>Gammaproteobacteria</taxon>
        <taxon>Vibrionales</taxon>
        <taxon>Vibrionaceae</taxon>
        <taxon>Aliivibrio</taxon>
    </lineage>
</organism>
<evidence type="ECO:0000255" key="1">
    <source>
        <dbReference type="HAMAP-Rule" id="MF_00600"/>
    </source>
</evidence>
<dbReference type="EC" id="5.6.1.7" evidence="1"/>
<dbReference type="EMBL" id="CP001139">
    <property type="protein sequence ID" value="ACH65107.1"/>
    <property type="molecule type" value="Genomic_DNA"/>
</dbReference>
<dbReference type="RefSeq" id="WP_005417158.1">
    <property type="nucleotide sequence ID" value="NC_011184.1"/>
</dbReference>
<dbReference type="SMR" id="B5FFY0"/>
<dbReference type="GeneID" id="54162829"/>
<dbReference type="KEGG" id="vfm:VFMJ11_0196"/>
<dbReference type="HOGENOM" id="CLU_016503_3_0_6"/>
<dbReference type="Proteomes" id="UP000001857">
    <property type="component" value="Chromosome I"/>
</dbReference>
<dbReference type="GO" id="GO:0005737">
    <property type="term" value="C:cytoplasm"/>
    <property type="evidence" value="ECO:0007669"/>
    <property type="project" value="UniProtKB-SubCell"/>
</dbReference>
<dbReference type="GO" id="GO:0005524">
    <property type="term" value="F:ATP binding"/>
    <property type="evidence" value="ECO:0007669"/>
    <property type="project" value="UniProtKB-UniRule"/>
</dbReference>
<dbReference type="GO" id="GO:0140662">
    <property type="term" value="F:ATP-dependent protein folding chaperone"/>
    <property type="evidence" value="ECO:0007669"/>
    <property type="project" value="InterPro"/>
</dbReference>
<dbReference type="GO" id="GO:0016853">
    <property type="term" value="F:isomerase activity"/>
    <property type="evidence" value="ECO:0007669"/>
    <property type="project" value="UniProtKB-KW"/>
</dbReference>
<dbReference type="GO" id="GO:0051082">
    <property type="term" value="F:unfolded protein binding"/>
    <property type="evidence" value="ECO:0007669"/>
    <property type="project" value="UniProtKB-UniRule"/>
</dbReference>
<dbReference type="GO" id="GO:0042026">
    <property type="term" value="P:protein refolding"/>
    <property type="evidence" value="ECO:0007669"/>
    <property type="project" value="UniProtKB-UniRule"/>
</dbReference>
<dbReference type="CDD" id="cd03344">
    <property type="entry name" value="GroEL"/>
    <property type="match status" value="1"/>
</dbReference>
<dbReference type="FunFam" id="1.10.560.10:FF:000001">
    <property type="entry name" value="60 kDa chaperonin"/>
    <property type="match status" value="1"/>
</dbReference>
<dbReference type="FunFam" id="3.50.7.10:FF:000001">
    <property type="entry name" value="60 kDa chaperonin"/>
    <property type="match status" value="1"/>
</dbReference>
<dbReference type="Gene3D" id="3.50.7.10">
    <property type="entry name" value="GroEL"/>
    <property type="match status" value="1"/>
</dbReference>
<dbReference type="Gene3D" id="1.10.560.10">
    <property type="entry name" value="GroEL-like equatorial domain"/>
    <property type="match status" value="1"/>
</dbReference>
<dbReference type="Gene3D" id="3.30.260.10">
    <property type="entry name" value="TCP-1-like chaperonin intermediate domain"/>
    <property type="match status" value="1"/>
</dbReference>
<dbReference type="HAMAP" id="MF_00600">
    <property type="entry name" value="CH60"/>
    <property type="match status" value="1"/>
</dbReference>
<dbReference type="InterPro" id="IPR018370">
    <property type="entry name" value="Chaperonin_Cpn60_CS"/>
</dbReference>
<dbReference type="InterPro" id="IPR001844">
    <property type="entry name" value="Cpn60/GroEL"/>
</dbReference>
<dbReference type="InterPro" id="IPR002423">
    <property type="entry name" value="Cpn60/GroEL/TCP-1"/>
</dbReference>
<dbReference type="InterPro" id="IPR027409">
    <property type="entry name" value="GroEL-like_apical_dom_sf"/>
</dbReference>
<dbReference type="InterPro" id="IPR027413">
    <property type="entry name" value="GROEL-like_equatorial_sf"/>
</dbReference>
<dbReference type="InterPro" id="IPR027410">
    <property type="entry name" value="TCP-1-like_intermed_sf"/>
</dbReference>
<dbReference type="NCBIfam" id="TIGR02348">
    <property type="entry name" value="GroEL"/>
    <property type="match status" value="1"/>
</dbReference>
<dbReference type="NCBIfam" id="NF000592">
    <property type="entry name" value="PRK00013.1"/>
    <property type="match status" value="1"/>
</dbReference>
<dbReference type="NCBIfam" id="NF009487">
    <property type="entry name" value="PRK12849.1"/>
    <property type="match status" value="1"/>
</dbReference>
<dbReference type="NCBIfam" id="NF009488">
    <property type="entry name" value="PRK12850.1"/>
    <property type="match status" value="1"/>
</dbReference>
<dbReference type="NCBIfam" id="NF009489">
    <property type="entry name" value="PRK12851.1"/>
    <property type="match status" value="1"/>
</dbReference>
<dbReference type="PANTHER" id="PTHR45633">
    <property type="entry name" value="60 KDA HEAT SHOCK PROTEIN, MITOCHONDRIAL"/>
    <property type="match status" value="1"/>
</dbReference>
<dbReference type="Pfam" id="PF00118">
    <property type="entry name" value="Cpn60_TCP1"/>
    <property type="match status" value="1"/>
</dbReference>
<dbReference type="PRINTS" id="PR00298">
    <property type="entry name" value="CHAPERONIN60"/>
</dbReference>
<dbReference type="SUPFAM" id="SSF52029">
    <property type="entry name" value="GroEL apical domain-like"/>
    <property type="match status" value="1"/>
</dbReference>
<dbReference type="SUPFAM" id="SSF48592">
    <property type="entry name" value="GroEL equatorial domain-like"/>
    <property type="match status" value="1"/>
</dbReference>
<dbReference type="SUPFAM" id="SSF54849">
    <property type="entry name" value="GroEL-intermediate domain like"/>
    <property type="match status" value="1"/>
</dbReference>
<dbReference type="PROSITE" id="PS00296">
    <property type="entry name" value="CHAPERONINS_CPN60"/>
    <property type="match status" value="1"/>
</dbReference>
<sequence length="548" mass="57375">MAAKDVKFGNDARIKMLEGVNVLADAVKVTLGPKGRNVVLDKSFGAPTITKDGVSVAREIELEDKFQNMGAQMVKEVASQANDAAGDGTTTATVLAQAIITEGLKAVAAGMNPMDLKRGIDKAVVAAVEELKALSVPCADTKAIAQVGTISANSDSTVGNLIAEAMDKVGRDGVITVEEGQALQDELDVVEGMQFDRGYLSPYFVNNQEAGSVDLESPFILLVDKKVSNIRELLPTLEAVAKASRPLLIIAEDVEGEALATLVVNNMRGIVKVAAVKAPGFGDRRKAMLQDIAVLTAGSVISEEIGLELEKVVLEDLGQAKRVTITKETTTIIDGSGEETIIQGRVSQIRQQIEDATSDYDKEKLQERVAKLAGGVAVIKVGAATEVEMKEKKDRVEDALHATRAAVEEGVVAGGGVALIRVASKVAGLVGDNEEQNVGIRVALRAMEAPIRQITKNAGEEDSVVANNVKAGEGSYGYNAATGEYGDMIEMGILDPTKVTRSALQFAASVAGLMITTEAMVTDKPQDSGSAMPDMGGMGGMGGMGGMM</sequence>
<feature type="chain" id="PRO_1000130076" description="Chaperonin GroEL">
    <location>
        <begin position="1"/>
        <end position="548"/>
    </location>
</feature>
<feature type="binding site" evidence="1">
    <location>
        <begin position="30"/>
        <end position="33"/>
    </location>
    <ligand>
        <name>ATP</name>
        <dbReference type="ChEBI" id="CHEBI:30616"/>
    </ligand>
</feature>
<feature type="binding site" evidence="1">
    <location>
        <position position="51"/>
    </location>
    <ligand>
        <name>ATP</name>
        <dbReference type="ChEBI" id="CHEBI:30616"/>
    </ligand>
</feature>
<feature type="binding site" evidence="1">
    <location>
        <begin position="87"/>
        <end position="91"/>
    </location>
    <ligand>
        <name>ATP</name>
        <dbReference type="ChEBI" id="CHEBI:30616"/>
    </ligand>
</feature>
<feature type="binding site" evidence="1">
    <location>
        <position position="415"/>
    </location>
    <ligand>
        <name>ATP</name>
        <dbReference type="ChEBI" id="CHEBI:30616"/>
    </ligand>
</feature>
<feature type="binding site" evidence="1">
    <location>
        <begin position="479"/>
        <end position="481"/>
    </location>
    <ligand>
        <name>ATP</name>
        <dbReference type="ChEBI" id="CHEBI:30616"/>
    </ligand>
</feature>
<feature type="binding site" evidence="1">
    <location>
        <position position="495"/>
    </location>
    <ligand>
        <name>ATP</name>
        <dbReference type="ChEBI" id="CHEBI:30616"/>
    </ligand>
</feature>
<protein>
    <recommendedName>
        <fullName evidence="1">Chaperonin GroEL</fullName>
        <ecNumber evidence="1">5.6.1.7</ecNumber>
    </recommendedName>
    <alternativeName>
        <fullName evidence="1">60 kDa chaperonin</fullName>
    </alternativeName>
    <alternativeName>
        <fullName evidence="1">Chaperonin-60</fullName>
        <shortName evidence="1">Cpn60</shortName>
    </alternativeName>
</protein>
<keyword id="KW-0067">ATP-binding</keyword>
<keyword id="KW-0143">Chaperone</keyword>
<keyword id="KW-0963">Cytoplasm</keyword>
<keyword id="KW-0413">Isomerase</keyword>
<keyword id="KW-0547">Nucleotide-binding</keyword>
<gene>
    <name evidence="1" type="primary">groEL</name>
    <name evidence="1" type="synonym">groL</name>
    <name type="ordered locus">VFMJ11_0196</name>
</gene>
<name>CH60_ALIFM</name>
<accession>B5FFY0</accession>
<proteinExistence type="inferred from homology"/>
<comment type="function">
    <text evidence="1">Together with its co-chaperonin GroES, plays an essential role in assisting protein folding. The GroEL-GroES system forms a nano-cage that allows encapsulation of the non-native substrate proteins and provides a physical environment optimized to promote and accelerate protein folding.</text>
</comment>
<comment type="catalytic activity">
    <reaction evidence="1">
        <text>ATP + H2O + a folded polypeptide = ADP + phosphate + an unfolded polypeptide.</text>
        <dbReference type="EC" id="5.6.1.7"/>
    </reaction>
</comment>
<comment type="subunit">
    <text evidence="1">Forms a cylinder of 14 subunits composed of two heptameric rings stacked back-to-back. Interacts with the co-chaperonin GroES.</text>
</comment>
<comment type="subcellular location">
    <subcellularLocation>
        <location evidence="1">Cytoplasm</location>
    </subcellularLocation>
</comment>
<comment type="similarity">
    <text evidence="1">Belongs to the chaperonin (HSP60) family.</text>
</comment>
<reference key="1">
    <citation type="submission" date="2008-08" db="EMBL/GenBank/DDBJ databases">
        <title>Complete sequence of Vibrio fischeri strain MJ11.</title>
        <authorList>
            <person name="Mandel M.J."/>
            <person name="Stabb E.V."/>
            <person name="Ruby E.G."/>
            <person name="Ferriera S."/>
            <person name="Johnson J."/>
            <person name="Kravitz S."/>
            <person name="Beeson K."/>
            <person name="Sutton G."/>
            <person name="Rogers Y.-H."/>
            <person name="Friedman R."/>
            <person name="Frazier M."/>
            <person name="Venter J.C."/>
        </authorList>
    </citation>
    <scope>NUCLEOTIDE SEQUENCE [LARGE SCALE GENOMIC DNA]</scope>
    <source>
        <strain>MJ11</strain>
    </source>
</reference>